<protein>
    <recommendedName>
        <fullName evidence="1">Small ribosomal subunit protein bS6</fullName>
    </recommendedName>
    <alternativeName>
        <fullName evidence="2">30S ribosomal protein S6</fullName>
    </alternativeName>
</protein>
<dbReference type="EMBL" id="CP000538">
    <property type="protein sequence ID" value="EAQ72256.1"/>
    <property type="molecule type" value="Genomic_DNA"/>
</dbReference>
<dbReference type="RefSeq" id="WP_002812868.1">
    <property type="nucleotide sequence ID" value="NC_008787.1"/>
</dbReference>
<dbReference type="SMR" id="A1W057"/>
<dbReference type="KEGG" id="cjj:CJJ81176_1088"/>
<dbReference type="eggNOG" id="COG0360">
    <property type="taxonomic scope" value="Bacteria"/>
</dbReference>
<dbReference type="HOGENOM" id="CLU_113441_4_1_7"/>
<dbReference type="Proteomes" id="UP000000646">
    <property type="component" value="Chromosome"/>
</dbReference>
<dbReference type="GO" id="GO:0022627">
    <property type="term" value="C:cytosolic small ribosomal subunit"/>
    <property type="evidence" value="ECO:0007669"/>
    <property type="project" value="TreeGrafter"/>
</dbReference>
<dbReference type="GO" id="GO:0070181">
    <property type="term" value="F:small ribosomal subunit rRNA binding"/>
    <property type="evidence" value="ECO:0007669"/>
    <property type="project" value="TreeGrafter"/>
</dbReference>
<dbReference type="GO" id="GO:0003735">
    <property type="term" value="F:structural constituent of ribosome"/>
    <property type="evidence" value="ECO:0007669"/>
    <property type="project" value="InterPro"/>
</dbReference>
<dbReference type="GO" id="GO:0006412">
    <property type="term" value="P:translation"/>
    <property type="evidence" value="ECO:0007669"/>
    <property type="project" value="UniProtKB-UniRule"/>
</dbReference>
<dbReference type="CDD" id="cd00473">
    <property type="entry name" value="bS6"/>
    <property type="match status" value="1"/>
</dbReference>
<dbReference type="FunFam" id="3.30.70.60:FF:000010">
    <property type="entry name" value="30S ribosomal protein S6"/>
    <property type="match status" value="1"/>
</dbReference>
<dbReference type="Gene3D" id="3.30.70.60">
    <property type="match status" value="1"/>
</dbReference>
<dbReference type="HAMAP" id="MF_00360">
    <property type="entry name" value="Ribosomal_bS6"/>
    <property type="match status" value="1"/>
</dbReference>
<dbReference type="InterPro" id="IPR000529">
    <property type="entry name" value="Ribosomal_bS6"/>
</dbReference>
<dbReference type="InterPro" id="IPR035980">
    <property type="entry name" value="Ribosomal_bS6_sf"/>
</dbReference>
<dbReference type="InterPro" id="IPR020814">
    <property type="entry name" value="Ribosomal_S6_plastid/chlpt"/>
</dbReference>
<dbReference type="InterPro" id="IPR014717">
    <property type="entry name" value="Transl_elong_EF1B/ribsomal_bS6"/>
</dbReference>
<dbReference type="NCBIfam" id="TIGR00166">
    <property type="entry name" value="S6"/>
    <property type="match status" value="1"/>
</dbReference>
<dbReference type="PANTHER" id="PTHR21011">
    <property type="entry name" value="MITOCHONDRIAL 28S RIBOSOMAL PROTEIN S6"/>
    <property type="match status" value="1"/>
</dbReference>
<dbReference type="PANTHER" id="PTHR21011:SF1">
    <property type="entry name" value="SMALL RIBOSOMAL SUBUNIT PROTEIN BS6M"/>
    <property type="match status" value="1"/>
</dbReference>
<dbReference type="Pfam" id="PF01250">
    <property type="entry name" value="Ribosomal_S6"/>
    <property type="match status" value="1"/>
</dbReference>
<dbReference type="SUPFAM" id="SSF54995">
    <property type="entry name" value="Ribosomal protein S6"/>
    <property type="match status" value="1"/>
</dbReference>
<comment type="function">
    <text evidence="1">Binds together with bS18 to 16S ribosomal RNA.</text>
</comment>
<comment type="similarity">
    <text evidence="1">Belongs to the bacterial ribosomal protein bS6 family.</text>
</comment>
<proteinExistence type="inferred from homology"/>
<accession>A1W057</accession>
<feature type="chain" id="PRO_1000005242" description="Small ribosomal subunit protein bS6">
    <location>
        <begin position="1"/>
        <end position="125"/>
    </location>
</feature>
<gene>
    <name evidence="1" type="primary">rpsF</name>
    <name type="ordered locus">CJJ81176_1088</name>
</gene>
<name>RS6_CAMJJ</name>
<keyword id="KW-0687">Ribonucleoprotein</keyword>
<keyword id="KW-0689">Ribosomal protein</keyword>
<keyword id="KW-0694">RNA-binding</keyword>
<keyword id="KW-0699">rRNA-binding</keyword>
<evidence type="ECO:0000255" key="1">
    <source>
        <dbReference type="HAMAP-Rule" id="MF_00360"/>
    </source>
</evidence>
<evidence type="ECO:0000305" key="2"/>
<organism>
    <name type="scientific">Campylobacter jejuni subsp. jejuni serotype O:23/36 (strain 81-176)</name>
    <dbReference type="NCBI Taxonomy" id="354242"/>
    <lineage>
        <taxon>Bacteria</taxon>
        <taxon>Pseudomonadati</taxon>
        <taxon>Campylobacterota</taxon>
        <taxon>Epsilonproteobacteria</taxon>
        <taxon>Campylobacterales</taxon>
        <taxon>Campylobacteraceae</taxon>
        <taxon>Campylobacter</taxon>
    </lineage>
</organism>
<sequence length="125" mass="14668">MKHYEVLFILKPTLTEEEVNAKLEFVKEVLTKNGAEIETVVPMGTRKLAYKIKKYERGTYFVIYFKAPTNLIAELERVLRITEEVIRFLIVKYENKKEIAAWEKLSHGIKQSKKEIKPLDAPEIQ</sequence>
<reference key="1">
    <citation type="submission" date="2006-12" db="EMBL/GenBank/DDBJ databases">
        <authorList>
            <person name="Fouts D.E."/>
            <person name="Nelson K.E."/>
            <person name="Sebastian Y."/>
        </authorList>
    </citation>
    <scope>NUCLEOTIDE SEQUENCE [LARGE SCALE GENOMIC DNA]</scope>
    <source>
        <strain>81-176</strain>
    </source>
</reference>